<proteinExistence type="inferred from homology"/>
<dbReference type="EC" id="2.1.3.15" evidence="1"/>
<dbReference type="EMBL" id="CP000036">
    <property type="protein sequence ID" value="ABB66916.1"/>
    <property type="molecule type" value="Genomic_DNA"/>
</dbReference>
<dbReference type="RefSeq" id="WP_000118410.1">
    <property type="nucleotide sequence ID" value="NC_007613.1"/>
</dbReference>
<dbReference type="SMR" id="Q31YE2"/>
<dbReference type="KEGG" id="sbo:SBO_2353"/>
<dbReference type="HOGENOM" id="CLU_015486_1_0_6"/>
<dbReference type="UniPathway" id="UPA00655">
    <property type="reaction ID" value="UER00711"/>
</dbReference>
<dbReference type="Proteomes" id="UP000007067">
    <property type="component" value="Chromosome"/>
</dbReference>
<dbReference type="GO" id="GO:0009329">
    <property type="term" value="C:acetate CoA-transferase complex"/>
    <property type="evidence" value="ECO:0007669"/>
    <property type="project" value="TreeGrafter"/>
</dbReference>
<dbReference type="GO" id="GO:0003989">
    <property type="term" value="F:acetyl-CoA carboxylase activity"/>
    <property type="evidence" value="ECO:0007669"/>
    <property type="project" value="InterPro"/>
</dbReference>
<dbReference type="GO" id="GO:0005524">
    <property type="term" value="F:ATP binding"/>
    <property type="evidence" value="ECO:0007669"/>
    <property type="project" value="UniProtKB-KW"/>
</dbReference>
<dbReference type="GO" id="GO:0016743">
    <property type="term" value="F:carboxyl- or carbamoyltransferase activity"/>
    <property type="evidence" value="ECO:0007669"/>
    <property type="project" value="UniProtKB-UniRule"/>
</dbReference>
<dbReference type="GO" id="GO:0008270">
    <property type="term" value="F:zinc ion binding"/>
    <property type="evidence" value="ECO:0007669"/>
    <property type="project" value="UniProtKB-UniRule"/>
</dbReference>
<dbReference type="GO" id="GO:0006633">
    <property type="term" value="P:fatty acid biosynthetic process"/>
    <property type="evidence" value="ECO:0007669"/>
    <property type="project" value="UniProtKB-KW"/>
</dbReference>
<dbReference type="GO" id="GO:2001295">
    <property type="term" value="P:malonyl-CoA biosynthetic process"/>
    <property type="evidence" value="ECO:0007669"/>
    <property type="project" value="UniProtKB-UniRule"/>
</dbReference>
<dbReference type="FunFam" id="3.90.226.10:FF:000013">
    <property type="entry name" value="Acetyl-coenzyme A carboxylase carboxyl transferase subunit beta"/>
    <property type="match status" value="1"/>
</dbReference>
<dbReference type="Gene3D" id="3.90.226.10">
    <property type="entry name" value="2-enoyl-CoA Hydratase, Chain A, domain 1"/>
    <property type="match status" value="1"/>
</dbReference>
<dbReference type="HAMAP" id="MF_01395">
    <property type="entry name" value="AcetylCoA_CT_beta"/>
    <property type="match status" value="1"/>
</dbReference>
<dbReference type="InterPro" id="IPR034733">
    <property type="entry name" value="AcCoA_carboxyl_beta"/>
</dbReference>
<dbReference type="InterPro" id="IPR000438">
    <property type="entry name" value="Acetyl_CoA_COase_Trfase_b_su"/>
</dbReference>
<dbReference type="InterPro" id="IPR029045">
    <property type="entry name" value="ClpP/crotonase-like_dom_sf"/>
</dbReference>
<dbReference type="InterPro" id="IPR011762">
    <property type="entry name" value="COA_CT_N"/>
</dbReference>
<dbReference type="InterPro" id="IPR041010">
    <property type="entry name" value="Znf-ACC"/>
</dbReference>
<dbReference type="NCBIfam" id="TIGR00515">
    <property type="entry name" value="accD"/>
    <property type="match status" value="1"/>
</dbReference>
<dbReference type="PANTHER" id="PTHR42995">
    <property type="entry name" value="ACETYL-COENZYME A CARBOXYLASE CARBOXYL TRANSFERASE SUBUNIT BETA, CHLOROPLASTIC"/>
    <property type="match status" value="1"/>
</dbReference>
<dbReference type="PANTHER" id="PTHR42995:SF5">
    <property type="entry name" value="ACETYL-COENZYME A CARBOXYLASE CARBOXYL TRANSFERASE SUBUNIT BETA, CHLOROPLASTIC"/>
    <property type="match status" value="1"/>
</dbReference>
<dbReference type="Pfam" id="PF01039">
    <property type="entry name" value="Carboxyl_trans"/>
    <property type="match status" value="1"/>
</dbReference>
<dbReference type="Pfam" id="PF17848">
    <property type="entry name" value="Zn_ribbon_ACC"/>
    <property type="match status" value="1"/>
</dbReference>
<dbReference type="PRINTS" id="PR01070">
    <property type="entry name" value="ACCCTRFRASEB"/>
</dbReference>
<dbReference type="SUPFAM" id="SSF52096">
    <property type="entry name" value="ClpP/crotonase"/>
    <property type="match status" value="1"/>
</dbReference>
<dbReference type="PROSITE" id="PS50980">
    <property type="entry name" value="COA_CT_NTER"/>
    <property type="match status" value="1"/>
</dbReference>
<keyword id="KW-0067">ATP-binding</keyword>
<keyword id="KW-0963">Cytoplasm</keyword>
<keyword id="KW-0275">Fatty acid biosynthesis</keyword>
<keyword id="KW-0276">Fatty acid metabolism</keyword>
<keyword id="KW-0444">Lipid biosynthesis</keyword>
<keyword id="KW-0443">Lipid metabolism</keyword>
<keyword id="KW-0479">Metal-binding</keyword>
<keyword id="KW-0547">Nucleotide-binding</keyword>
<keyword id="KW-0808">Transferase</keyword>
<keyword id="KW-0862">Zinc</keyword>
<keyword id="KW-0863">Zinc-finger</keyword>
<reference key="1">
    <citation type="journal article" date="2005" name="Nucleic Acids Res.">
        <title>Genome dynamics and diversity of Shigella species, the etiologic agents of bacillary dysentery.</title>
        <authorList>
            <person name="Yang F."/>
            <person name="Yang J."/>
            <person name="Zhang X."/>
            <person name="Chen L."/>
            <person name="Jiang Y."/>
            <person name="Yan Y."/>
            <person name="Tang X."/>
            <person name="Wang J."/>
            <person name="Xiong Z."/>
            <person name="Dong J."/>
            <person name="Xue Y."/>
            <person name="Zhu Y."/>
            <person name="Xu X."/>
            <person name="Sun L."/>
            <person name="Chen S."/>
            <person name="Nie H."/>
            <person name="Peng J."/>
            <person name="Xu J."/>
            <person name="Wang Y."/>
            <person name="Yuan Z."/>
            <person name="Wen Y."/>
            <person name="Yao Z."/>
            <person name="Shen Y."/>
            <person name="Qiang B."/>
            <person name="Hou Y."/>
            <person name="Yu J."/>
            <person name="Jin Q."/>
        </authorList>
    </citation>
    <scope>NUCLEOTIDE SEQUENCE [LARGE SCALE GENOMIC DNA]</scope>
    <source>
        <strain>Sb227</strain>
    </source>
</reference>
<evidence type="ECO:0000255" key="1">
    <source>
        <dbReference type="HAMAP-Rule" id="MF_01395"/>
    </source>
</evidence>
<evidence type="ECO:0000255" key="2">
    <source>
        <dbReference type="PROSITE-ProRule" id="PRU01136"/>
    </source>
</evidence>
<evidence type="ECO:0000256" key="3">
    <source>
        <dbReference type="SAM" id="MobiDB-lite"/>
    </source>
</evidence>
<protein>
    <recommendedName>
        <fullName evidence="1">Acetyl-coenzyme A carboxylase carboxyl transferase subunit beta</fullName>
        <shortName evidence="1">ACCase subunit beta</shortName>
        <shortName evidence="1">Acetyl-CoA carboxylase carboxyltransferase subunit beta</shortName>
        <ecNumber evidence="1">2.1.3.15</ecNumber>
    </recommendedName>
</protein>
<comment type="function">
    <text evidence="1">Component of the acetyl coenzyme A carboxylase (ACC) complex. Biotin carboxylase (BC) catalyzes the carboxylation of biotin on its carrier protein (BCCP) and then the CO(2) group is transferred by the transcarboxylase to acetyl-CoA to form malonyl-CoA.</text>
</comment>
<comment type="catalytic activity">
    <reaction evidence="1">
        <text>N(6)-carboxybiotinyl-L-lysyl-[protein] + acetyl-CoA = N(6)-biotinyl-L-lysyl-[protein] + malonyl-CoA</text>
        <dbReference type="Rhea" id="RHEA:54728"/>
        <dbReference type="Rhea" id="RHEA-COMP:10505"/>
        <dbReference type="Rhea" id="RHEA-COMP:10506"/>
        <dbReference type="ChEBI" id="CHEBI:57288"/>
        <dbReference type="ChEBI" id="CHEBI:57384"/>
        <dbReference type="ChEBI" id="CHEBI:83144"/>
        <dbReference type="ChEBI" id="CHEBI:83145"/>
        <dbReference type="EC" id="2.1.3.15"/>
    </reaction>
</comment>
<comment type="cofactor">
    <cofactor evidence="1">
        <name>Zn(2+)</name>
        <dbReference type="ChEBI" id="CHEBI:29105"/>
    </cofactor>
    <text evidence="1">Binds 1 zinc ion per subunit.</text>
</comment>
<comment type="pathway">
    <text evidence="1">Lipid metabolism; malonyl-CoA biosynthesis; malonyl-CoA from acetyl-CoA: step 1/1.</text>
</comment>
<comment type="subunit">
    <text evidence="1">Acetyl-CoA carboxylase is a heterohexamer composed of biotin carboxyl carrier protein (AccB), biotin carboxylase (AccC) and two subunits each of ACCase subunit alpha (AccA) and ACCase subunit beta (AccD).</text>
</comment>
<comment type="subcellular location">
    <subcellularLocation>
        <location evidence="1">Cytoplasm</location>
    </subcellularLocation>
</comment>
<comment type="similarity">
    <text evidence="1">Belongs to the AccD/PCCB family.</text>
</comment>
<name>ACCD_SHIBS</name>
<accession>Q31YE2</accession>
<gene>
    <name evidence="1" type="primary">accD</name>
    <name type="ordered locus">SBO_2353</name>
</gene>
<feature type="chain" id="PRO_0000359064" description="Acetyl-coenzyme A carboxylase carboxyl transferase subunit beta">
    <location>
        <begin position="1"/>
        <end position="304"/>
    </location>
</feature>
<feature type="domain" description="CoA carboxyltransferase N-terminal" evidence="2">
    <location>
        <begin position="23"/>
        <end position="292"/>
    </location>
</feature>
<feature type="zinc finger region" description="C4-type" evidence="1">
    <location>
        <begin position="27"/>
        <end position="49"/>
    </location>
</feature>
<feature type="region of interest" description="Disordered" evidence="3">
    <location>
        <begin position="284"/>
        <end position="304"/>
    </location>
</feature>
<feature type="compositionally biased region" description="Pro residues" evidence="3">
    <location>
        <begin position="295"/>
        <end position="304"/>
    </location>
</feature>
<feature type="binding site" evidence="1">
    <location>
        <position position="27"/>
    </location>
    <ligand>
        <name>Zn(2+)</name>
        <dbReference type="ChEBI" id="CHEBI:29105"/>
    </ligand>
</feature>
<feature type="binding site" evidence="1">
    <location>
        <position position="30"/>
    </location>
    <ligand>
        <name>Zn(2+)</name>
        <dbReference type="ChEBI" id="CHEBI:29105"/>
    </ligand>
</feature>
<feature type="binding site" evidence="1">
    <location>
        <position position="46"/>
    </location>
    <ligand>
        <name>Zn(2+)</name>
        <dbReference type="ChEBI" id="CHEBI:29105"/>
    </ligand>
</feature>
<feature type="binding site" evidence="1">
    <location>
        <position position="49"/>
    </location>
    <ligand>
        <name>Zn(2+)</name>
        <dbReference type="ChEBI" id="CHEBI:29105"/>
    </ligand>
</feature>
<organism>
    <name type="scientific">Shigella boydii serotype 4 (strain Sb227)</name>
    <dbReference type="NCBI Taxonomy" id="300268"/>
    <lineage>
        <taxon>Bacteria</taxon>
        <taxon>Pseudomonadati</taxon>
        <taxon>Pseudomonadota</taxon>
        <taxon>Gammaproteobacteria</taxon>
        <taxon>Enterobacterales</taxon>
        <taxon>Enterobacteriaceae</taxon>
        <taxon>Shigella</taxon>
    </lineage>
</organism>
<sequence length="304" mass="33356">MSWIERIKSNITPTRKASIPEGVWTKCDSCGQVLYRAELERNLEVCPKCDHHMRMTARNRLHSLLDEGSLVEMGSELEPKDVLKFRDSKKYKDRLASAQKETGEKDALVVMKGTLYGMPVVAAAFEFAFMGGSMGSVVGARFVRAVEQALEDNCPLICFSASGGARMQEALMSLMQMAKTSAALAKMQERGLPYISVLTDPTMGGVSASFAMLGDLNIAEPKALIGFAGPRVIEQTVREKLPLGFQRSEFLIEKGAIDMIVRRPEMRLKLASILAKLMNLPAPNPEAPREGVVVPPVPDQEPEA</sequence>